<accession>Q57J56</accession>
<evidence type="ECO:0000255" key="1">
    <source>
        <dbReference type="HAMAP-Rule" id="MF_00059"/>
    </source>
</evidence>
<keyword id="KW-0240">DNA-directed RNA polymerase</keyword>
<keyword id="KW-0548">Nucleotidyltransferase</keyword>
<keyword id="KW-0804">Transcription</keyword>
<keyword id="KW-0808">Transferase</keyword>
<comment type="function">
    <text evidence="1">DNA-dependent RNA polymerase catalyzes the transcription of DNA into RNA using the four ribonucleoside triphosphates as substrates.</text>
</comment>
<comment type="catalytic activity">
    <reaction evidence="1">
        <text>RNA(n) + a ribonucleoside 5'-triphosphate = RNA(n+1) + diphosphate</text>
        <dbReference type="Rhea" id="RHEA:21248"/>
        <dbReference type="Rhea" id="RHEA-COMP:14527"/>
        <dbReference type="Rhea" id="RHEA-COMP:17342"/>
        <dbReference type="ChEBI" id="CHEBI:33019"/>
        <dbReference type="ChEBI" id="CHEBI:61557"/>
        <dbReference type="ChEBI" id="CHEBI:140395"/>
        <dbReference type="EC" id="2.7.7.6"/>
    </reaction>
</comment>
<comment type="subunit">
    <text evidence="1">Homodimer. The RNAP catalytic core consists of 2 alpha, 1 beta, 1 beta' and 1 omega subunit. When a sigma factor is associated with the core the holoenzyme is formed, which can initiate transcription.</text>
</comment>
<comment type="domain">
    <text evidence="1">The N-terminal domain is essential for RNAP assembly and basal transcription, whereas the C-terminal domain is involved in interaction with transcriptional regulators and with upstream promoter elements.</text>
</comment>
<comment type="similarity">
    <text evidence="1">Belongs to the RNA polymerase alpha chain family.</text>
</comment>
<gene>
    <name evidence="1" type="primary">rpoA</name>
    <name type="ordered locus">SCH_3350</name>
</gene>
<sequence>MQGSVTEFLKPRLVDIEQVSSTHAKVTLEPLERGFGHTLGNALRRILLSSMPGCAVTEVEIDGVLHEYSTKEGVQEDILEILLNLKGLAVRVQGKDEVILTLNKSGIGPVTAADITHDGDVEIVKPQHVICHLTDENASISMRIKVQRGRGYVPASTRIHSEEDERPIGRLLVDACYSPVERIAYNVEAARVEQRTDLDKLVIEMETNGTIDPEEAIRRAATILAEQLEAFVDLRDVRQPEVKEEKPEFDPILLRPVDDLELTVRSANCLKAEAIHYIGDLVQRTEVELLKTPNLGKKSLTEIKDVLASRGLSLGMRLEDWPPASIADE</sequence>
<name>RPOA_SALCH</name>
<protein>
    <recommendedName>
        <fullName evidence="1">DNA-directed RNA polymerase subunit alpha</fullName>
        <shortName evidence="1">RNAP subunit alpha</shortName>
        <ecNumber evidence="1">2.7.7.6</ecNumber>
    </recommendedName>
    <alternativeName>
        <fullName evidence="1">RNA polymerase subunit alpha</fullName>
    </alternativeName>
    <alternativeName>
        <fullName evidence="1">Transcriptase subunit alpha</fullName>
    </alternativeName>
</protein>
<organism>
    <name type="scientific">Salmonella choleraesuis (strain SC-B67)</name>
    <dbReference type="NCBI Taxonomy" id="321314"/>
    <lineage>
        <taxon>Bacteria</taxon>
        <taxon>Pseudomonadati</taxon>
        <taxon>Pseudomonadota</taxon>
        <taxon>Gammaproteobacteria</taxon>
        <taxon>Enterobacterales</taxon>
        <taxon>Enterobacteriaceae</taxon>
        <taxon>Salmonella</taxon>
    </lineage>
</organism>
<feature type="chain" id="PRO_0000225299" description="DNA-directed RNA polymerase subunit alpha">
    <location>
        <begin position="1"/>
        <end position="329"/>
    </location>
</feature>
<feature type="region of interest" description="Alpha N-terminal domain (alpha-NTD)" evidence="1">
    <location>
        <begin position="1"/>
        <end position="235"/>
    </location>
</feature>
<feature type="region of interest" description="Alpha C-terminal domain (alpha-CTD)" evidence="1">
    <location>
        <begin position="249"/>
        <end position="329"/>
    </location>
</feature>
<reference key="1">
    <citation type="journal article" date="2005" name="Nucleic Acids Res.">
        <title>The genome sequence of Salmonella enterica serovar Choleraesuis, a highly invasive and resistant zoonotic pathogen.</title>
        <authorList>
            <person name="Chiu C.-H."/>
            <person name="Tang P."/>
            <person name="Chu C."/>
            <person name="Hu S."/>
            <person name="Bao Q."/>
            <person name="Yu J."/>
            <person name="Chou Y.-Y."/>
            <person name="Wang H.-S."/>
            <person name="Lee Y.-S."/>
        </authorList>
    </citation>
    <scope>NUCLEOTIDE SEQUENCE [LARGE SCALE GENOMIC DNA]</scope>
    <source>
        <strain>SC-B67</strain>
    </source>
</reference>
<proteinExistence type="inferred from homology"/>
<dbReference type="EC" id="2.7.7.6" evidence="1"/>
<dbReference type="EMBL" id="AE017220">
    <property type="protein sequence ID" value="AAX67256.1"/>
    <property type="molecule type" value="Genomic_DNA"/>
</dbReference>
<dbReference type="RefSeq" id="WP_001540999.1">
    <property type="nucleotide sequence ID" value="NC_006905.1"/>
</dbReference>
<dbReference type="SMR" id="Q57J56"/>
<dbReference type="KEGG" id="sec:SCH_3350"/>
<dbReference type="HOGENOM" id="CLU_053084_0_0_6"/>
<dbReference type="Proteomes" id="UP000000538">
    <property type="component" value="Chromosome"/>
</dbReference>
<dbReference type="GO" id="GO:0005737">
    <property type="term" value="C:cytoplasm"/>
    <property type="evidence" value="ECO:0007669"/>
    <property type="project" value="UniProtKB-ARBA"/>
</dbReference>
<dbReference type="GO" id="GO:0000428">
    <property type="term" value="C:DNA-directed RNA polymerase complex"/>
    <property type="evidence" value="ECO:0007669"/>
    <property type="project" value="UniProtKB-KW"/>
</dbReference>
<dbReference type="GO" id="GO:0003677">
    <property type="term" value="F:DNA binding"/>
    <property type="evidence" value="ECO:0007669"/>
    <property type="project" value="UniProtKB-UniRule"/>
</dbReference>
<dbReference type="GO" id="GO:0003899">
    <property type="term" value="F:DNA-directed RNA polymerase activity"/>
    <property type="evidence" value="ECO:0007669"/>
    <property type="project" value="UniProtKB-UniRule"/>
</dbReference>
<dbReference type="GO" id="GO:0046983">
    <property type="term" value="F:protein dimerization activity"/>
    <property type="evidence" value="ECO:0007669"/>
    <property type="project" value="InterPro"/>
</dbReference>
<dbReference type="GO" id="GO:0006351">
    <property type="term" value="P:DNA-templated transcription"/>
    <property type="evidence" value="ECO:0007669"/>
    <property type="project" value="UniProtKB-UniRule"/>
</dbReference>
<dbReference type="CDD" id="cd06928">
    <property type="entry name" value="RNAP_alpha_NTD"/>
    <property type="match status" value="1"/>
</dbReference>
<dbReference type="FunFam" id="1.10.150.20:FF:000001">
    <property type="entry name" value="DNA-directed RNA polymerase subunit alpha"/>
    <property type="match status" value="1"/>
</dbReference>
<dbReference type="FunFam" id="2.170.120.12:FF:000001">
    <property type="entry name" value="DNA-directed RNA polymerase subunit alpha"/>
    <property type="match status" value="1"/>
</dbReference>
<dbReference type="Gene3D" id="1.10.150.20">
    <property type="entry name" value="5' to 3' exonuclease, C-terminal subdomain"/>
    <property type="match status" value="1"/>
</dbReference>
<dbReference type="Gene3D" id="2.170.120.12">
    <property type="entry name" value="DNA-directed RNA polymerase, insert domain"/>
    <property type="match status" value="1"/>
</dbReference>
<dbReference type="Gene3D" id="3.30.1360.10">
    <property type="entry name" value="RNA polymerase, RBP11-like subunit"/>
    <property type="match status" value="1"/>
</dbReference>
<dbReference type="HAMAP" id="MF_00059">
    <property type="entry name" value="RNApol_bact_RpoA"/>
    <property type="match status" value="1"/>
</dbReference>
<dbReference type="InterPro" id="IPR011262">
    <property type="entry name" value="DNA-dir_RNA_pol_insert"/>
</dbReference>
<dbReference type="InterPro" id="IPR011263">
    <property type="entry name" value="DNA-dir_RNA_pol_RpoA/D/Rpb3"/>
</dbReference>
<dbReference type="InterPro" id="IPR011773">
    <property type="entry name" value="DNA-dir_RpoA"/>
</dbReference>
<dbReference type="InterPro" id="IPR036603">
    <property type="entry name" value="RBP11-like"/>
</dbReference>
<dbReference type="InterPro" id="IPR011260">
    <property type="entry name" value="RNAP_asu_C"/>
</dbReference>
<dbReference type="InterPro" id="IPR036643">
    <property type="entry name" value="RNApol_insert_sf"/>
</dbReference>
<dbReference type="NCBIfam" id="NF003513">
    <property type="entry name" value="PRK05182.1-2"/>
    <property type="match status" value="1"/>
</dbReference>
<dbReference type="NCBIfam" id="NF003519">
    <property type="entry name" value="PRK05182.2-5"/>
    <property type="match status" value="1"/>
</dbReference>
<dbReference type="NCBIfam" id="TIGR02027">
    <property type="entry name" value="rpoA"/>
    <property type="match status" value="1"/>
</dbReference>
<dbReference type="Pfam" id="PF01000">
    <property type="entry name" value="RNA_pol_A_bac"/>
    <property type="match status" value="1"/>
</dbReference>
<dbReference type="Pfam" id="PF03118">
    <property type="entry name" value="RNA_pol_A_CTD"/>
    <property type="match status" value="1"/>
</dbReference>
<dbReference type="Pfam" id="PF01193">
    <property type="entry name" value="RNA_pol_L"/>
    <property type="match status" value="1"/>
</dbReference>
<dbReference type="SMART" id="SM00662">
    <property type="entry name" value="RPOLD"/>
    <property type="match status" value="1"/>
</dbReference>
<dbReference type="SUPFAM" id="SSF47789">
    <property type="entry name" value="C-terminal domain of RNA polymerase alpha subunit"/>
    <property type="match status" value="1"/>
</dbReference>
<dbReference type="SUPFAM" id="SSF56553">
    <property type="entry name" value="Insert subdomain of RNA polymerase alpha subunit"/>
    <property type="match status" value="1"/>
</dbReference>
<dbReference type="SUPFAM" id="SSF55257">
    <property type="entry name" value="RBP11-like subunits of RNA polymerase"/>
    <property type="match status" value="1"/>
</dbReference>